<evidence type="ECO:0000250" key="1">
    <source>
        <dbReference type="UniProtKB" id="Q4KMQ1"/>
    </source>
</evidence>
<evidence type="ECO:0000256" key="2">
    <source>
        <dbReference type="SAM" id="MobiDB-lite"/>
    </source>
</evidence>
<evidence type="ECO:0000269" key="3">
    <source>
    </source>
</evidence>
<evidence type="ECO:0000269" key="4">
    <source>
    </source>
</evidence>
<evidence type="ECO:0000269" key="5">
    <source>
    </source>
</evidence>
<evidence type="ECO:0000269" key="6">
    <source>
    </source>
</evidence>
<evidence type="ECO:0000269" key="7">
    <source>
    </source>
</evidence>
<evidence type="ECO:0000269" key="8">
    <source>
    </source>
</evidence>
<evidence type="ECO:0000269" key="9">
    <source>
    </source>
</evidence>
<evidence type="ECO:0000269" key="10">
    <source>
    </source>
</evidence>
<evidence type="ECO:0000305" key="11"/>
<evidence type="ECO:0007744" key="12">
    <source>
    </source>
</evidence>
<evidence type="ECO:0007744" key="13">
    <source>
    </source>
</evidence>
<name>TPRN_MOUSE</name>
<protein>
    <recommendedName>
        <fullName>Taperin</fullName>
    </recommendedName>
</protein>
<organism>
    <name type="scientific">Mus musculus</name>
    <name type="common">Mouse</name>
    <dbReference type="NCBI Taxonomy" id="10090"/>
    <lineage>
        <taxon>Eukaryota</taxon>
        <taxon>Metazoa</taxon>
        <taxon>Chordata</taxon>
        <taxon>Craniata</taxon>
        <taxon>Vertebrata</taxon>
        <taxon>Euteleostomi</taxon>
        <taxon>Mammalia</taxon>
        <taxon>Eutheria</taxon>
        <taxon>Euarchontoglires</taxon>
        <taxon>Glires</taxon>
        <taxon>Rodentia</taxon>
        <taxon>Myomorpha</taxon>
        <taxon>Muroidea</taxon>
        <taxon>Muridae</taxon>
        <taxon>Murinae</taxon>
        <taxon>Mus</taxon>
        <taxon>Mus</taxon>
    </lineage>
</organism>
<comment type="function">
    <text evidence="1 6 7 8 9 10">Essential for hearing (PubMed:30380417, PubMed:35752427, PubMed:37952086). Required for maintenance of stereocilia on both inner and outer hair cells (PubMed:27693694). Necessary for the integrity of the stereociliary rootlet (PubMed:30159668). May act as an actin cytoskeleton regulator involved in the regulation of actin dynamics at the pointed end in hair cells (PubMed:30380417). Forms rings at the base of stereocilia and binds actin filaments in the stereocilia which may stabilize the stereocilia (PubMed:37952086). Acts as a strong inhibitor of PPP1CA phosphatase activity (By similarity). Recruited to sites of DNA damage and may play a role in DNA damage repair (By similarity).</text>
</comment>
<comment type="subunit">
    <text evidence="1 8 10">Interacts with GRXCR2; the interaction restricts TPRN to the stereocilum basal region (PubMed:30380417). Interacts with actin ACTB; the interaction may stabilize stereocilia (PubMed:37952086). Interacts with CLIC5 (PubMed:37952086). Interacts with PTPRQ (PubMed:37952086). TPRN, CLIC5 and PTPQR form concentric rings at the base of stereocilia and may form a complex (PubMed:37952086). Interacts with phosphatase PPP1CA; the interaction results in inhibition of PPP1CA phosphatase activity (By similarity). Interacts with DNA damage response proteins XRCC6/KU70, XRCC5/KU80, PARP1, TOP1 and TOP2A; these interactions recruit TPRN to sites of DNA damage where it may play a role in DNA repair (By similarity).</text>
</comment>
<comment type="subcellular location">
    <subcellularLocation>
        <location evidence="4 5 7 8 9 10">Cell projection</location>
        <location evidence="4 5 7 8 9 10">Stereocilium</location>
    </subcellularLocation>
    <subcellularLocation>
        <location evidence="5">Cell projection</location>
        <location evidence="5">Microvillus</location>
    </subcellularLocation>
    <subcellularLocation>
        <location evidence="1">Nucleus</location>
        <location evidence="1">Nucleoplasm</location>
    </subcellularLocation>
    <subcellularLocation>
        <location evidence="1">Cytoplasm</location>
    </subcellularLocation>
    <text evidence="1 4 5 7 8 10">Localized prominently at the basal taper region of hair cell stereocilia (PubMed:20170899, PubMed:30159668, PubMed:30380417, PubMed:37952086). Forms organized ring-like structures with diameters ranging from 150 to 200 nm in the stereocilium taper region (PubMed:37952086). Detected in microvilli of inner hair cell supporting cells (PubMed:24285636). Predominantly nuclear in non-stereocilium cells but can shuttle between the nucleus and the cytoplasm (By similarity).</text>
</comment>
<comment type="tissue specificity">
    <text evidence="3 4 10">In the organ of Corti, expressed in the inner ear hair cell stereocilia and the supporting cells (at protein level) (PubMed:20170899, PubMed:37952086). Expressed in the sensory epithelia of the organ of Corti and vestibular end organs and, to a lesser extent, in Reisner's membrane and the spiral ligament (at protein level) (PubMed:20170899). At postnatal day 2, expression is detected in cochlea, liver, brain, kidney, heart and lung (PubMed:20170898).</text>
</comment>
<comment type="disruption phenotype">
    <text evidence="7 10">Progressive hearing loss with progressive stereocilium degeneration, defects in stereociliary rootlets and mechanotransduction defects of the stereocilia (PubMed:30159668, PubMed:37952086). Fused stereocilia are observed in inner hair cells (PubMed:37952086). Abnormal stereocilium distribution of actin-binding protein Rdx with diffuse Rdx expression throughout the stereocilium rather than concentration at the stereocilium base as in the wild-type (PubMed:30159668). Significantly reduced levels of Rdx and Actb in the cochlea at postnatal day 30 (PubMed:30159668). Adult mice show almost complete deafness with slight to severe hair cell loss with aging (PubMed:37952086).</text>
</comment>
<comment type="miscellaneous">
    <text evidence="9">Reducing Tprn expression corrects stereocilium morphological defects and partially restores hearing in Grxcr2 mutant mice.</text>
</comment>
<comment type="similarity">
    <text evidence="11">Belongs to the taperin family.</text>
</comment>
<comment type="sequence caution" evidence="11">
    <conflict type="erroneous initiation">
        <sequence resource="EMBL-CDS" id="AAH89508"/>
    </conflict>
    <text>Truncated N-terminus.</text>
</comment>
<comment type="sequence caution" evidence="11">
    <conflict type="erroneous initiation">
        <sequence resource="EMBL-CDS" id="BAC38669"/>
    </conflict>
    <text>Truncated N-terminus.</text>
</comment>
<comment type="sequence caution" evidence="11">
    <conflict type="frameshift">
        <sequence resource="EMBL-CDS" id="BAC38669"/>
    </conflict>
</comment>
<comment type="sequence caution" evidence="11">
    <conflict type="erroneous initiation">
        <sequence resource="EMBL-CDS" id="BAE38373"/>
    </conflict>
    <text>Truncated N-terminus.</text>
</comment>
<comment type="sequence caution" evidence="11">
    <conflict type="erroneous initiation">
        <sequence resource="EMBL-CDS" id="BAE42670"/>
    </conflict>
    <text>Truncated N-terminus.</text>
</comment>
<comment type="sequence caution" evidence="11">
    <conflict type="frameshift">
        <sequence resource="EMBL-CDS" id="BAE42670"/>
    </conflict>
</comment>
<proteinExistence type="evidence at protein level"/>
<dbReference type="EMBL" id="AK082888">
    <property type="protein sequence ID" value="BAC38669.1"/>
    <property type="status" value="ALT_SEQ"/>
    <property type="molecule type" value="mRNA"/>
</dbReference>
<dbReference type="EMBL" id="AK165772">
    <property type="protein sequence ID" value="BAE38373.1"/>
    <property type="status" value="ALT_INIT"/>
    <property type="molecule type" value="mRNA"/>
</dbReference>
<dbReference type="EMBL" id="AK171799">
    <property type="protein sequence ID" value="BAE42670.1"/>
    <property type="status" value="ALT_SEQ"/>
    <property type="molecule type" value="mRNA"/>
</dbReference>
<dbReference type="EMBL" id="AL732309">
    <property type="status" value="NOT_ANNOTATED_CDS"/>
    <property type="molecule type" value="Genomic_DNA"/>
</dbReference>
<dbReference type="EMBL" id="BC024573">
    <property type="protein sequence ID" value="AAH24573.1"/>
    <property type="molecule type" value="mRNA"/>
</dbReference>
<dbReference type="EMBL" id="BC055478">
    <property type="protein sequence ID" value="AAH55478.1"/>
    <property type="molecule type" value="mRNA"/>
</dbReference>
<dbReference type="EMBL" id="BC089508">
    <property type="protein sequence ID" value="AAH89508.1"/>
    <property type="status" value="ALT_INIT"/>
    <property type="molecule type" value="mRNA"/>
</dbReference>
<dbReference type="CCDS" id="CCDS15759.2"/>
<dbReference type="RefSeq" id="NP_780495.2">
    <property type="nucleotide sequence ID" value="NM_175286.4"/>
</dbReference>
<dbReference type="FunCoup" id="A2AI08">
    <property type="interactions" value="98"/>
</dbReference>
<dbReference type="STRING" id="10090.ENSMUSP00000109975"/>
<dbReference type="GlyGen" id="A2AI08">
    <property type="glycosylation" value="3 sites, 1 N-linked glycan (1 site)"/>
</dbReference>
<dbReference type="iPTMnet" id="A2AI08"/>
<dbReference type="PhosphoSitePlus" id="A2AI08"/>
<dbReference type="PaxDb" id="10090-ENSMUSP00000109975"/>
<dbReference type="PeptideAtlas" id="A2AI08"/>
<dbReference type="ProteomicsDB" id="259072"/>
<dbReference type="Pumba" id="A2AI08"/>
<dbReference type="Antibodypedia" id="18953">
    <property type="antibodies" value="37 antibodies from 12 providers"/>
</dbReference>
<dbReference type="Ensembl" id="ENSMUST00000114336.4">
    <property type="protein sequence ID" value="ENSMUSP00000109975.4"/>
    <property type="gene ID" value="ENSMUSG00000048707.10"/>
</dbReference>
<dbReference type="GeneID" id="97031"/>
<dbReference type="KEGG" id="mmu:97031"/>
<dbReference type="UCSC" id="uc008ira.2">
    <property type="organism name" value="mouse"/>
</dbReference>
<dbReference type="AGR" id="MGI:2139535"/>
<dbReference type="CTD" id="286262"/>
<dbReference type="MGI" id="MGI:2139535">
    <property type="gene designation" value="Tprn"/>
</dbReference>
<dbReference type="VEuPathDB" id="HostDB:ENSMUSG00000048707"/>
<dbReference type="eggNOG" id="ENOG502RHCM">
    <property type="taxonomic scope" value="Eukaryota"/>
</dbReference>
<dbReference type="GeneTree" id="ENSGT00530000064035"/>
<dbReference type="HOGENOM" id="CLU_023685_1_0_1"/>
<dbReference type="InParanoid" id="A2AI08"/>
<dbReference type="OMA" id="SKWQQNG"/>
<dbReference type="OrthoDB" id="9945184at2759"/>
<dbReference type="PhylomeDB" id="A2AI08"/>
<dbReference type="TreeFam" id="TF333324"/>
<dbReference type="BioGRID-ORCS" id="97031">
    <property type="hits" value="1 hit in 78 CRISPR screens"/>
</dbReference>
<dbReference type="PRO" id="PR:A2AI08"/>
<dbReference type="Proteomes" id="UP000000589">
    <property type="component" value="Chromosome 2"/>
</dbReference>
<dbReference type="RNAct" id="A2AI08">
    <property type="molecule type" value="protein"/>
</dbReference>
<dbReference type="Bgee" id="ENSMUSG00000048707">
    <property type="expression patterns" value="Expressed in seminiferous tubule of testis and 151 other cell types or tissues"/>
</dbReference>
<dbReference type="GO" id="GO:0005737">
    <property type="term" value="C:cytoplasm"/>
    <property type="evidence" value="ECO:0000250"/>
    <property type="project" value="UniProtKB"/>
</dbReference>
<dbReference type="GO" id="GO:0005829">
    <property type="term" value="C:cytosol"/>
    <property type="evidence" value="ECO:0000304"/>
    <property type="project" value="Reactome"/>
</dbReference>
<dbReference type="GO" id="GO:0005902">
    <property type="term" value="C:microvillus"/>
    <property type="evidence" value="ECO:0000314"/>
    <property type="project" value="UniProtKB"/>
</dbReference>
<dbReference type="GO" id="GO:0005654">
    <property type="term" value="C:nucleoplasm"/>
    <property type="evidence" value="ECO:0000250"/>
    <property type="project" value="UniProtKB"/>
</dbReference>
<dbReference type="GO" id="GO:0032420">
    <property type="term" value="C:stereocilium"/>
    <property type="evidence" value="ECO:0000314"/>
    <property type="project" value="UniProtKB"/>
</dbReference>
<dbReference type="GO" id="GO:0120044">
    <property type="term" value="C:stereocilium base"/>
    <property type="evidence" value="ECO:0000314"/>
    <property type="project" value="UniProtKB"/>
</dbReference>
<dbReference type="GO" id="GO:0003779">
    <property type="term" value="F:actin binding"/>
    <property type="evidence" value="ECO:0000353"/>
    <property type="project" value="UniProtKB"/>
</dbReference>
<dbReference type="GO" id="GO:0008157">
    <property type="term" value="F:protein phosphatase 1 binding"/>
    <property type="evidence" value="ECO:0000250"/>
    <property type="project" value="UniProtKB"/>
</dbReference>
<dbReference type="GO" id="GO:0019903">
    <property type="term" value="F:protein phosphatase binding"/>
    <property type="evidence" value="ECO:0000353"/>
    <property type="project" value="UniProtKB"/>
</dbReference>
<dbReference type="GO" id="GO:0004865">
    <property type="term" value="F:protein serine/threonine phosphatase inhibitor activity"/>
    <property type="evidence" value="ECO:0000250"/>
    <property type="project" value="UniProtKB"/>
</dbReference>
<dbReference type="GO" id="GO:0060088">
    <property type="term" value="P:auditory receptor cell stereocilium organization"/>
    <property type="evidence" value="ECO:0000316"/>
    <property type="project" value="MGI"/>
</dbReference>
<dbReference type="GO" id="GO:0007605">
    <property type="term" value="P:sensory perception of sound"/>
    <property type="evidence" value="ECO:0000315"/>
    <property type="project" value="UniProtKB"/>
</dbReference>
<dbReference type="GO" id="GO:0120045">
    <property type="term" value="P:stereocilium maintenance"/>
    <property type="evidence" value="ECO:0000315"/>
    <property type="project" value="UniProtKB"/>
</dbReference>
<dbReference type="InterPro" id="IPR025903">
    <property type="entry name" value="Phostensin/Taperin_N_dom"/>
</dbReference>
<dbReference type="InterPro" id="IPR025907">
    <property type="entry name" value="Phostensin/Taperin_PP1-bd_dom"/>
</dbReference>
<dbReference type="InterPro" id="IPR026671">
    <property type="entry name" value="PPP1R18/Tprn"/>
</dbReference>
<dbReference type="PANTHER" id="PTHR21685:SF1">
    <property type="entry name" value="TAPERIN"/>
    <property type="match status" value="1"/>
</dbReference>
<dbReference type="PANTHER" id="PTHR21685">
    <property type="entry name" value="TON-B BOX DOMAIN"/>
    <property type="match status" value="1"/>
</dbReference>
<dbReference type="Pfam" id="PF13914">
    <property type="entry name" value="Phostensin"/>
    <property type="match status" value="1"/>
</dbReference>
<dbReference type="Pfam" id="PF13916">
    <property type="entry name" value="Phostensin_N"/>
    <property type="match status" value="1"/>
</dbReference>
<keyword id="KW-0009">Actin-binding</keyword>
<keyword id="KW-0966">Cell projection</keyword>
<keyword id="KW-0963">Cytoplasm</keyword>
<keyword id="KW-1009">Hearing</keyword>
<keyword id="KW-0539">Nucleus</keyword>
<keyword id="KW-0597">Phosphoprotein</keyword>
<keyword id="KW-0650">Protein phosphatase inhibitor</keyword>
<keyword id="KW-1185">Reference proteome</keyword>
<sequence>MAGLGRLDPGPRTVMPAWKREILERRRAKLAALSGGQGSGAAPDGPNERLVLAESLGPLSQNPFMRLESERRRGTRPAQQLLELYCRVPGVRTIRADNILIIESAPGFPPAVPPAAGIRAAEVVVYEAPQPGRVSRLLEKFDSPAAPCRRGSPERFRPALPQLPVASASAATRTPTNRSLAPASPVRLSQPAPPISPVPVAQRAGQRSACCEPAHPDGTAGPGARRSDFLQKTGSNSFTVHPRGLPRSAVNRSLSNGPMTQESPTGPANGLSGSPPVPGKWKPKVESKEPSLHPPPSPGTPSATSVGPPAFPAPSPASATPSQRQWVSSATSANDSFEIRPSSKPDMETIPIGDLQARALANLRVNSRNSFVLIPKRKAPGNYPLAGRQFEEPKGEVGWASQSQGLGSQLVSTVDGAPALEKSPLAAEMQWAVRKGACPRPAISDTDKCVRWQRPASPPPFLPATAEAEPAEGLGVPGLAKNGQEPVRPGLPVTFIDEVDSEEEAFQEAKLPSSAVGVPSQYHLHPARPGHTSELLNRGSNTFTVVPKRKPGTLQEPHLSQTNGQSQQGAEEQDAESLSGPHTTLENTLKKRYPTVHEIEVIGGYLALQKSCLIKAGSSRKKMKISFNDKSLHTTFEYPSESSLAQEEAEEEEEEEGEEDGEEEEVGPDSEKPFTVFLPRATFVSSVGPESSSGLSSYTPKHSMAFSKWQEQTLVQTPTDVELPPKEVMLTPASQNDLSDFRSEPALYF</sequence>
<reference key="1">
    <citation type="journal article" date="2005" name="Science">
        <title>The transcriptional landscape of the mammalian genome.</title>
        <authorList>
            <person name="Carninci P."/>
            <person name="Kasukawa T."/>
            <person name="Katayama S."/>
            <person name="Gough J."/>
            <person name="Frith M.C."/>
            <person name="Maeda N."/>
            <person name="Oyama R."/>
            <person name="Ravasi T."/>
            <person name="Lenhard B."/>
            <person name="Wells C."/>
            <person name="Kodzius R."/>
            <person name="Shimokawa K."/>
            <person name="Bajic V.B."/>
            <person name="Brenner S.E."/>
            <person name="Batalov S."/>
            <person name="Forrest A.R."/>
            <person name="Zavolan M."/>
            <person name="Davis M.J."/>
            <person name="Wilming L.G."/>
            <person name="Aidinis V."/>
            <person name="Allen J.E."/>
            <person name="Ambesi-Impiombato A."/>
            <person name="Apweiler R."/>
            <person name="Aturaliya R.N."/>
            <person name="Bailey T.L."/>
            <person name="Bansal M."/>
            <person name="Baxter L."/>
            <person name="Beisel K.W."/>
            <person name="Bersano T."/>
            <person name="Bono H."/>
            <person name="Chalk A.M."/>
            <person name="Chiu K.P."/>
            <person name="Choudhary V."/>
            <person name="Christoffels A."/>
            <person name="Clutterbuck D.R."/>
            <person name="Crowe M.L."/>
            <person name="Dalla E."/>
            <person name="Dalrymple B.P."/>
            <person name="de Bono B."/>
            <person name="Della Gatta G."/>
            <person name="di Bernardo D."/>
            <person name="Down T."/>
            <person name="Engstrom P."/>
            <person name="Fagiolini M."/>
            <person name="Faulkner G."/>
            <person name="Fletcher C.F."/>
            <person name="Fukushima T."/>
            <person name="Furuno M."/>
            <person name="Futaki S."/>
            <person name="Gariboldi M."/>
            <person name="Georgii-Hemming P."/>
            <person name="Gingeras T.R."/>
            <person name="Gojobori T."/>
            <person name="Green R.E."/>
            <person name="Gustincich S."/>
            <person name="Harbers M."/>
            <person name="Hayashi Y."/>
            <person name="Hensch T.K."/>
            <person name="Hirokawa N."/>
            <person name="Hill D."/>
            <person name="Huminiecki L."/>
            <person name="Iacono M."/>
            <person name="Ikeo K."/>
            <person name="Iwama A."/>
            <person name="Ishikawa T."/>
            <person name="Jakt M."/>
            <person name="Kanapin A."/>
            <person name="Katoh M."/>
            <person name="Kawasawa Y."/>
            <person name="Kelso J."/>
            <person name="Kitamura H."/>
            <person name="Kitano H."/>
            <person name="Kollias G."/>
            <person name="Krishnan S.P."/>
            <person name="Kruger A."/>
            <person name="Kummerfeld S.K."/>
            <person name="Kurochkin I.V."/>
            <person name="Lareau L.F."/>
            <person name="Lazarevic D."/>
            <person name="Lipovich L."/>
            <person name="Liu J."/>
            <person name="Liuni S."/>
            <person name="McWilliam S."/>
            <person name="Madan Babu M."/>
            <person name="Madera M."/>
            <person name="Marchionni L."/>
            <person name="Matsuda H."/>
            <person name="Matsuzawa S."/>
            <person name="Miki H."/>
            <person name="Mignone F."/>
            <person name="Miyake S."/>
            <person name="Morris K."/>
            <person name="Mottagui-Tabar S."/>
            <person name="Mulder N."/>
            <person name="Nakano N."/>
            <person name="Nakauchi H."/>
            <person name="Ng P."/>
            <person name="Nilsson R."/>
            <person name="Nishiguchi S."/>
            <person name="Nishikawa S."/>
            <person name="Nori F."/>
            <person name="Ohara O."/>
            <person name="Okazaki Y."/>
            <person name="Orlando V."/>
            <person name="Pang K.C."/>
            <person name="Pavan W.J."/>
            <person name="Pavesi G."/>
            <person name="Pesole G."/>
            <person name="Petrovsky N."/>
            <person name="Piazza S."/>
            <person name="Reed J."/>
            <person name="Reid J.F."/>
            <person name="Ring B.Z."/>
            <person name="Ringwald M."/>
            <person name="Rost B."/>
            <person name="Ruan Y."/>
            <person name="Salzberg S.L."/>
            <person name="Sandelin A."/>
            <person name="Schneider C."/>
            <person name="Schoenbach C."/>
            <person name="Sekiguchi K."/>
            <person name="Semple C.A."/>
            <person name="Seno S."/>
            <person name="Sessa L."/>
            <person name="Sheng Y."/>
            <person name="Shibata Y."/>
            <person name="Shimada H."/>
            <person name="Shimada K."/>
            <person name="Silva D."/>
            <person name="Sinclair B."/>
            <person name="Sperling S."/>
            <person name="Stupka E."/>
            <person name="Sugiura K."/>
            <person name="Sultana R."/>
            <person name="Takenaka Y."/>
            <person name="Taki K."/>
            <person name="Tammoja K."/>
            <person name="Tan S.L."/>
            <person name="Tang S."/>
            <person name="Taylor M.S."/>
            <person name="Tegner J."/>
            <person name="Teichmann S.A."/>
            <person name="Ueda H.R."/>
            <person name="van Nimwegen E."/>
            <person name="Verardo R."/>
            <person name="Wei C.L."/>
            <person name="Yagi K."/>
            <person name="Yamanishi H."/>
            <person name="Zabarovsky E."/>
            <person name="Zhu S."/>
            <person name="Zimmer A."/>
            <person name="Hide W."/>
            <person name="Bult C."/>
            <person name="Grimmond S.M."/>
            <person name="Teasdale R.D."/>
            <person name="Liu E.T."/>
            <person name="Brusic V."/>
            <person name="Quackenbush J."/>
            <person name="Wahlestedt C."/>
            <person name="Mattick J.S."/>
            <person name="Hume D.A."/>
            <person name="Kai C."/>
            <person name="Sasaki D."/>
            <person name="Tomaru Y."/>
            <person name="Fukuda S."/>
            <person name="Kanamori-Katayama M."/>
            <person name="Suzuki M."/>
            <person name="Aoki J."/>
            <person name="Arakawa T."/>
            <person name="Iida J."/>
            <person name="Imamura K."/>
            <person name="Itoh M."/>
            <person name="Kato T."/>
            <person name="Kawaji H."/>
            <person name="Kawagashira N."/>
            <person name="Kawashima T."/>
            <person name="Kojima M."/>
            <person name="Kondo S."/>
            <person name="Konno H."/>
            <person name="Nakano K."/>
            <person name="Ninomiya N."/>
            <person name="Nishio T."/>
            <person name="Okada M."/>
            <person name="Plessy C."/>
            <person name="Shibata K."/>
            <person name="Shiraki T."/>
            <person name="Suzuki S."/>
            <person name="Tagami M."/>
            <person name="Waki K."/>
            <person name="Watahiki A."/>
            <person name="Okamura-Oho Y."/>
            <person name="Suzuki H."/>
            <person name="Kawai J."/>
            <person name="Hayashizaki Y."/>
        </authorList>
    </citation>
    <scope>NUCLEOTIDE SEQUENCE [LARGE SCALE MRNA]</scope>
    <source>
        <strain>C57BL/6J</strain>
        <strain>NOD</strain>
        <tissue>Diencephalon</tissue>
    </source>
</reference>
<reference key="2">
    <citation type="journal article" date="2009" name="PLoS Biol.">
        <title>Lineage-specific biology revealed by a finished genome assembly of the mouse.</title>
        <authorList>
            <person name="Church D.M."/>
            <person name="Goodstadt L."/>
            <person name="Hillier L.W."/>
            <person name="Zody M.C."/>
            <person name="Goldstein S."/>
            <person name="She X."/>
            <person name="Bult C.J."/>
            <person name="Agarwala R."/>
            <person name="Cherry J.L."/>
            <person name="DiCuccio M."/>
            <person name="Hlavina W."/>
            <person name="Kapustin Y."/>
            <person name="Meric P."/>
            <person name="Maglott D."/>
            <person name="Birtle Z."/>
            <person name="Marques A.C."/>
            <person name="Graves T."/>
            <person name="Zhou S."/>
            <person name="Teague B."/>
            <person name="Potamousis K."/>
            <person name="Churas C."/>
            <person name="Place M."/>
            <person name="Herschleb J."/>
            <person name="Runnheim R."/>
            <person name="Forrest D."/>
            <person name="Amos-Landgraf J."/>
            <person name="Schwartz D.C."/>
            <person name="Cheng Z."/>
            <person name="Lindblad-Toh K."/>
            <person name="Eichler E.E."/>
            <person name="Ponting C.P."/>
        </authorList>
    </citation>
    <scope>NUCLEOTIDE SEQUENCE [LARGE SCALE GENOMIC DNA]</scope>
    <source>
        <strain>C57BL/6J</strain>
    </source>
</reference>
<reference key="3">
    <citation type="journal article" date="2004" name="Genome Res.">
        <title>The status, quality, and expansion of the NIH full-length cDNA project: the Mammalian Gene Collection (MGC).</title>
        <authorList>
            <consortium name="The MGC Project Team"/>
        </authorList>
    </citation>
    <scope>NUCLEOTIDE SEQUENCE [LARGE SCALE MRNA] OF 135-749</scope>
    <source>
        <strain>FVB/N</strain>
        <tissue>Brain</tissue>
        <tissue>Kidney</tissue>
    </source>
</reference>
<reference key="4">
    <citation type="journal article" date="2009" name="Immunity">
        <title>The phagosomal proteome in interferon-gamma-activated macrophages.</title>
        <authorList>
            <person name="Trost M."/>
            <person name="English L."/>
            <person name="Lemieux S."/>
            <person name="Courcelles M."/>
            <person name="Desjardins M."/>
            <person name="Thibault P."/>
        </authorList>
    </citation>
    <scope>PHOSPHORYLATION [LARGE SCALE ANALYSIS] AT SER-457 AND SER-501</scope>
    <scope>IDENTIFICATION BY MASS SPECTROMETRY [LARGE SCALE ANALYSIS]</scope>
</reference>
<reference key="5">
    <citation type="journal article" date="2010" name="Am. J. Hum. Genet.">
        <title>Targeted capture and next-generation sequencing identifies C9orf75, encoding taperin, as the mutated gene in nonsyndromic deafness DFNB79.</title>
        <authorList>
            <person name="Rehman A.U."/>
            <person name="Morell R.J."/>
            <person name="Belyantseva I.A."/>
            <person name="Khan S.Y."/>
            <person name="Boger E.T."/>
            <person name="Shahzad M."/>
            <person name="Ahmed Z.M."/>
            <person name="Riazuddin S."/>
            <person name="Khan S.N."/>
            <person name="Riazuddin S."/>
            <person name="Friedman T.B."/>
        </authorList>
    </citation>
    <scope>SUBCELLULAR LOCATION</scope>
    <scope>TISSUE SPECIFICITY</scope>
</reference>
<reference key="6">
    <citation type="journal article" date="2010" name="Am. J. Hum. Genet.">
        <title>Mutations in TPRN cause a progressive form of autosomal-recessive nonsyndromic hearing loss.</title>
        <authorList>
            <person name="Li Y."/>
            <person name="Pohl E."/>
            <person name="Boulouiz R."/>
            <person name="Schraders M."/>
            <person name="Nurnberg G."/>
            <person name="Charif M."/>
            <person name="Admiraal R.J."/>
            <person name="von Ameln S."/>
            <person name="Baessmann I."/>
            <person name="Kandil M."/>
            <person name="Veltman J.A."/>
            <person name="Nurnberg P."/>
            <person name="Kubisch C."/>
            <person name="Barakat A."/>
            <person name="Kremer H."/>
            <person name="Wollnik B."/>
        </authorList>
    </citation>
    <scope>TISSUE SPECIFICITY</scope>
</reference>
<reference key="7">
    <citation type="journal article" date="2010" name="Cell">
        <title>A tissue-specific atlas of mouse protein phosphorylation and expression.</title>
        <authorList>
            <person name="Huttlin E.L."/>
            <person name="Jedrychowski M.P."/>
            <person name="Elias J.E."/>
            <person name="Goswami T."/>
            <person name="Rad R."/>
            <person name="Beausoleil S.A."/>
            <person name="Villen J."/>
            <person name="Haas W."/>
            <person name="Sowa M.E."/>
            <person name="Gygi S.P."/>
        </authorList>
    </citation>
    <scope>PHOSPHORYLATION [LARGE SCALE ANALYSIS] AT SER-457 AND SER-501</scope>
    <scope>IDENTIFICATION BY MASS SPECTROMETRY [LARGE SCALE ANALYSIS]</scope>
    <source>
        <tissue>Brain</tissue>
        <tissue>Kidney</tissue>
        <tissue>Spleen</tissue>
        <tissue>Testis</tissue>
    </source>
</reference>
<reference key="8">
    <citation type="journal article" date="2014" name="Cytoskeleton">
        <title>CLIC5 stabilizes membrane-actin filament linkages at the base of hair cell stereocilia in a molecular complex with radixin, taperin, and myosin VI.</title>
        <authorList>
            <person name="Salles F.T."/>
            <person name="Andrade L.R."/>
            <person name="Tanda S."/>
            <person name="Grati M."/>
            <person name="Plona K.L."/>
            <person name="Gagnon L.H."/>
            <person name="Johnson K.R."/>
            <person name="Kachar B."/>
            <person name="Berryman M.A."/>
        </authorList>
    </citation>
    <scope>SUBCELLULAR LOCATION</scope>
</reference>
<reference key="9">
    <citation type="journal article" date="2016" name="Biochem. Biophys. Res. Commun.">
        <title>Progressive hearing loss and degeneration of hair cell stereocilia in taperin gene knockout mice.</title>
        <authorList>
            <person name="Chen M."/>
            <person name="Wang Q."/>
            <person name="Zhu G.H."/>
            <person name="Hu P."/>
            <person name="Zhou Y."/>
            <person name="Wang T."/>
            <person name="Lai R.S."/>
            <person name="Xiao Z.A."/>
            <person name="Xie D.H."/>
        </authorList>
    </citation>
    <scope>FUNCTION</scope>
    <source>
        <strain>C57BL/6J</strain>
    </source>
</reference>
<reference key="10">
    <citation type="journal article" date="2018" name="Cell Rep.">
        <title>GRXCR2 Regulates Taperin Localization Critical for Stereocilia Morphology and Hearing.</title>
        <authorList>
            <person name="Liu C."/>
            <person name="Luo N."/>
            <person name="Tung C.Y."/>
            <person name="Perrin B.J."/>
            <person name="Zhao B."/>
        </authorList>
    </citation>
    <scope>FUNCTION</scope>
    <scope>INTERACTION WITH GRXCR2</scope>
    <scope>SUBCELLULAR LOCATION</scope>
</reference>
<reference key="11">
    <citation type="journal article" date="2019" name="Front. Med.">
        <title>Tprn is essential for the integrity of stereociliary rootlet in cochlear hair cells in mice.</title>
        <authorList>
            <person name="Men Y."/>
            <person name="Li X."/>
            <person name="Tu H."/>
            <person name="Zhang A."/>
            <person name="Fu X."/>
            <person name="Wang Z."/>
            <person name="Jin Y."/>
            <person name="Hou C."/>
            <person name="Zhang T."/>
            <person name="Zhang S."/>
            <person name="Zhou Y."/>
            <person name="Li B."/>
            <person name="Li J."/>
            <person name="Sun X."/>
            <person name="Wang H."/>
            <person name="Gao J."/>
        </authorList>
    </citation>
    <scope>FUNCTION</scope>
    <scope>SUBCELLULAR LOCATION</scope>
    <scope>DISRUPTION PHENOTYPE</scope>
    <source>
        <strain>CBA/CaJ</strain>
    </source>
</reference>
<reference key="12">
    <citation type="journal article" date="2022" name="Neuroscience">
        <title>Reducing Taperin Expression Restores Hearing in Grxcr2 Mutant Mice.</title>
        <authorList>
            <person name="Liu C."/>
            <person name="Luo N."/>
            <person name="Zhao B."/>
        </authorList>
    </citation>
    <scope>FUNCTION</scope>
    <scope>SUBCELLULAR LOCATION</scope>
</reference>
<reference key="13">
    <citation type="journal article" date="2024" name="Mol. Ther.">
        <title>Critical role of TPRN rings in the stereocilia for hearing.</title>
        <authorList>
            <person name="Qi J."/>
            <person name="Tan F."/>
            <person name="Zhang L."/>
            <person name="Zhou Y."/>
            <person name="Zhang Z."/>
            <person name="Sun Q."/>
            <person name="Li N."/>
            <person name="Fang Y."/>
            <person name="Chen X."/>
            <person name="Wu Y."/>
            <person name="Zhong G."/>
            <person name="Chai R."/>
        </authorList>
    </citation>
    <scope>FUNCTION</scope>
    <scope>INTERACTION WITH ACTB; CLIC5 AND PTPRQ</scope>
    <scope>SUBCELLULAR LOCATION</scope>
    <scope>TISSUE SPECIFICITY</scope>
    <scope>DISRUPTION PHENOTYPE</scope>
</reference>
<feature type="chain" id="PRO_0000330310" description="Taperin">
    <location>
        <begin position="1"/>
        <end position="749"/>
    </location>
</feature>
<feature type="region of interest" description="Disordered" evidence="2">
    <location>
        <begin position="144"/>
        <end position="348"/>
    </location>
</feature>
<feature type="region of interest" description="Disordered" evidence="2">
    <location>
        <begin position="502"/>
        <end position="586"/>
    </location>
</feature>
<feature type="region of interest" description="Disordered" evidence="2">
    <location>
        <begin position="636"/>
        <end position="673"/>
    </location>
</feature>
<feature type="region of interest" description="Disordered" evidence="2">
    <location>
        <begin position="730"/>
        <end position="749"/>
    </location>
</feature>
<feature type="compositionally biased region" description="Polar residues" evidence="2">
    <location>
        <begin position="169"/>
        <end position="179"/>
    </location>
</feature>
<feature type="compositionally biased region" description="Polar residues" evidence="2">
    <location>
        <begin position="230"/>
        <end position="239"/>
    </location>
</feature>
<feature type="compositionally biased region" description="Polar residues" evidence="2">
    <location>
        <begin position="250"/>
        <end position="266"/>
    </location>
</feature>
<feature type="compositionally biased region" description="Polar residues" evidence="2">
    <location>
        <begin position="323"/>
        <end position="335"/>
    </location>
</feature>
<feature type="compositionally biased region" description="Basic and acidic residues" evidence="2">
    <location>
        <begin position="337"/>
        <end position="347"/>
    </location>
</feature>
<feature type="compositionally biased region" description="Polar residues" evidence="2">
    <location>
        <begin position="534"/>
        <end position="544"/>
    </location>
</feature>
<feature type="compositionally biased region" description="Polar residues" evidence="2">
    <location>
        <begin position="558"/>
        <end position="570"/>
    </location>
</feature>
<feature type="compositionally biased region" description="Acidic residues" evidence="2">
    <location>
        <begin position="647"/>
        <end position="668"/>
    </location>
</feature>
<feature type="modified residue" description="Phosphoserine" evidence="1">
    <location>
        <position position="274"/>
    </location>
</feature>
<feature type="modified residue" description="Phosphoserine" evidence="1">
    <location>
        <position position="401"/>
    </location>
</feature>
<feature type="modified residue" description="Phosphoserine" evidence="12 13">
    <location>
        <position position="457"/>
    </location>
</feature>
<feature type="modified residue" description="Phosphoserine" evidence="12 13">
    <location>
        <position position="501"/>
    </location>
</feature>
<feature type="sequence conflict" description="In Ref. 1; BAE38373." evidence="11" ref="1">
    <original>P</original>
    <variation>T</variation>
    <location>
        <position position="264"/>
    </location>
</feature>
<feature type="sequence conflict" description="In Ref. 1; BAE42670." evidence="11" ref="1">
    <original>T</original>
    <variation>A</variation>
    <location>
        <position position="265"/>
    </location>
</feature>
<feature type="sequence conflict" description="In Ref. 1; BAE42670." evidence="11" ref="1">
    <original>A</original>
    <variation>V</variation>
    <location>
        <position position="432"/>
    </location>
</feature>
<feature type="sequence conflict" description="In Ref. 1; BAE42670." evidence="11" ref="1">
    <original>A</original>
    <variation>D</variation>
    <location>
        <position position="527"/>
    </location>
</feature>
<feature type="sequence conflict" description="In Ref. 1; BAE42670." evidence="11" ref="1">
    <original>HT</original>
    <variation>DN</variation>
    <location>
        <begin position="531"/>
        <end position="532"/>
    </location>
</feature>
<feature type="sequence conflict" description="In Ref. 1; BAE42670." evidence="11" ref="1">
    <location>
        <position position="650"/>
    </location>
</feature>
<feature type="sequence conflict" description="In Ref. 3; AAH89508." evidence="11" ref="3">
    <original>E</original>
    <variation>G</variation>
    <location>
        <position position="671"/>
    </location>
</feature>
<accession>A2AI08</accession>
<accession>Q3TAJ8</accession>
<accession>Q3TMR8</accession>
<accession>Q5FWB3</accession>
<accession>Q7TNG3</accession>
<accession>Q8BNM5</accession>
<accession>Q8R1G4</accession>
<gene>
    <name type="primary">Tprn</name>
</gene>